<proteinExistence type="inferred from homology"/>
<name>TATA_RHOPT</name>
<accession>B3Q6I3</accession>
<gene>
    <name evidence="1" type="primary">tatA</name>
    <name type="ordered locus">Rpal_3189</name>
</gene>
<feature type="chain" id="PRO_1000197903" description="Sec-independent protein translocase protein TatA">
    <location>
        <begin position="1"/>
        <end position="78"/>
    </location>
</feature>
<feature type="transmembrane region" description="Helical" evidence="1">
    <location>
        <begin position="1"/>
        <end position="21"/>
    </location>
</feature>
<feature type="region of interest" description="Disordered" evidence="2">
    <location>
        <begin position="43"/>
        <end position="78"/>
    </location>
</feature>
<feature type="compositionally biased region" description="Basic and acidic residues" evidence="2">
    <location>
        <begin position="43"/>
        <end position="60"/>
    </location>
</feature>
<feature type="compositionally biased region" description="Polar residues" evidence="2">
    <location>
        <begin position="61"/>
        <end position="72"/>
    </location>
</feature>
<dbReference type="EMBL" id="CP001096">
    <property type="protein sequence ID" value="ACF01692.1"/>
    <property type="molecule type" value="Genomic_DNA"/>
</dbReference>
<dbReference type="RefSeq" id="WP_011158398.1">
    <property type="nucleotide sequence ID" value="NC_011004.1"/>
</dbReference>
<dbReference type="SMR" id="B3Q6I3"/>
<dbReference type="KEGG" id="rpt:Rpal_3189"/>
<dbReference type="HOGENOM" id="CLU_086034_5_0_5"/>
<dbReference type="OrthoDB" id="7161179at2"/>
<dbReference type="Proteomes" id="UP000001725">
    <property type="component" value="Chromosome"/>
</dbReference>
<dbReference type="GO" id="GO:0033281">
    <property type="term" value="C:TAT protein transport complex"/>
    <property type="evidence" value="ECO:0007669"/>
    <property type="project" value="UniProtKB-UniRule"/>
</dbReference>
<dbReference type="GO" id="GO:0008320">
    <property type="term" value="F:protein transmembrane transporter activity"/>
    <property type="evidence" value="ECO:0007669"/>
    <property type="project" value="UniProtKB-UniRule"/>
</dbReference>
<dbReference type="GO" id="GO:0043953">
    <property type="term" value="P:protein transport by the Tat complex"/>
    <property type="evidence" value="ECO:0007669"/>
    <property type="project" value="UniProtKB-UniRule"/>
</dbReference>
<dbReference type="Gene3D" id="1.20.5.3310">
    <property type="match status" value="1"/>
</dbReference>
<dbReference type="HAMAP" id="MF_00236">
    <property type="entry name" value="TatA_E"/>
    <property type="match status" value="1"/>
</dbReference>
<dbReference type="InterPro" id="IPR003369">
    <property type="entry name" value="TatA/B/E"/>
</dbReference>
<dbReference type="InterPro" id="IPR006312">
    <property type="entry name" value="TatA/E"/>
</dbReference>
<dbReference type="NCBIfam" id="NF001940">
    <property type="entry name" value="PRK00720.1"/>
    <property type="match status" value="1"/>
</dbReference>
<dbReference type="NCBIfam" id="TIGR01411">
    <property type="entry name" value="tatAE"/>
    <property type="match status" value="1"/>
</dbReference>
<dbReference type="PANTHER" id="PTHR42982">
    <property type="entry name" value="SEC-INDEPENDENT PROTEIN TRANSLOCASE PROTEIN TATA"/>
    <property type="match status" value="1"/>
</dbReference>
<dbReference type="PANTHER" id="PTHR42982:SF1">
    <property type="entry name" value="SEC-INDEPENDENT PROTEIN TRANSLOCASE PROTEIN TATA"/>
    <property type="match status" value="1"/>
</dbReference>
<dbReference type="Pfam" id="PF02416">
    <property type="entry name" value="TatA_B_E"/>
    <property type="match status" value="1"/>
</dbReference>
<reference key="1">
    <citation type="submission" date="2008-05" db="EMBL/GenBank/DDBJ databases">
        <title>Complete sequence of Rhodopseudomonas palustris TIE-1.</title>
        <authorList>
            <consortium name="US DOE Joint Genome Institute"/>
            <person name="Lucas S."/>
            <person name="Copeland A."/>
            <person name="Lapidus A."/>
            <person name="Glavina del Rio T."/>
            <person name="Dalin E."/>
            <person name="Tice H."/>
            <person name="Pitluck S."/>
            <person name="Chain P."/>
            <person name="Malfatti S."/>
            <person name="Shin M."/>
            <person name="Vergez L."/>
            <person name="Lang D."/>
            <person name="Schmutz J."/>
            <person name="Larimer F."/>
            <person name="Land M."/>
            <person name="Hauser L."/>
            <person name="Kyrpides N."/>
            <person name="Mikhailova N."/>
            <person name="Emerson D."/>
            <person name="Newman D.K."/>
            <person name="Roden E."/>
            <person name="Richardson P."/>
        </authorList>
    </citation>
    <scope>NUCLEOTIDE SEQUENCE [LARGE SCALE GENOMIC DNA]</scope>
    <source>
        <strain>TIE-1</strain>
    </source>
</reference>
<protein>
    <recommendedName>
        <fullName evidence="1">Sec-independent protein translocase protein TatA</fullName>
    </recommendedName>
</protein>
<sequence>MGSLSIWHWIVVIAVVLLLFGRGKISDLMGDVAQGIKSFKKGLQDDEKTAEKSEPVKSIDHTSTPGATNRTDVGSKAV</sequence>
<organism>
    <name type="scientific">Rhodopseudomonas palustris (strain TIE-1)</name>
    <dbReference type="NCBI Taxonomy" id="395960"/>
    <lineage>
        <taxon>Bacteria</taxon>
        <taxon>Pseudomonadati</taxon>
        <taxon>Pseudomonadota</taxon>
        <taxon>Alphaproteobacteria</taxon>
        <taxon>Hyphomicrobiales</taxon>
        <taxon>Nitrobacteraceae</taxon>
        <taxon>Rhodopseudomonas</taxon>
    </lineage>
</organism>
<keyword id="KW-0997">Cell inner membrane</keyword>
<keyword id="KW-1003">Cell membrane</keyword>
<keyword id="KW-0472">Membrane</keyword>
<keyword id="KW-0653">Protein transport</keyword>
<keyword id="KW-0811">Translocation</keyword>
<keyword id="KW-0812">Transmembrane</keyword>
<keyword id="KW-1133">Transmembrane helix</keyword>
<keyword id="KW-0813">Transport</keyword>
<comment type="function">
    <text evidence="1">Part of the twin-arginine translocation (Tat) system that transports large folded proteins containing a characteristic twin-arginine motif in their signal peptide across membranes. TatA could form the protein-conducting channel of the Tat system.</text>
</comment>
<comment type="subunit">
    <text evidence="1">The Tat system comprises two distinct complexes: a TatABC complex, containing multiple copies of TatA, TatB and TatC subunits, and a separate TatA complex, containing only TatA subunits. Substrates initially bind to the TatABC complex, which probably triggers association of the separate TatA complex to form the active translocon.</text>
</comment>
<comment type="subcellular location">
    <subcellularLocation>
        <location evidence="1">Cell inner membrane</location>
        <topology evidence="1">Single-pass membrane protein</topology>
    </subcellularLocation>
</comment>
<comment type="similarity">
    <text evidence="1">Belongs to the TatA/E family.</text>
</comment>
<evidence type="ECO:0000255" key="1">
    <source>
        <dbReference type="HAMAP-Rule" id="MF_00236"/>
    </source>
</evidence>
<evidence type="ECO:0000256" key="2">
    <source>
        <dbReference type="SAM" id="MobiDB-lite"/>
    </source>
</evidence>